<protein>
    <recommendedName>
        <fullName evidence="1">DNA primase DnaG</fullName>
        <ecNumber evidence="1">2.7.7.101</ecNumber>
    </recommendedName>
</protein>
<proteinExistence type="inferred from homology"/>
<gene>
    <name evidence="1" type="primary">dnaG</name>
    <name type="ordered locus">PYRAB04750</name>
    <name type="ORF">PAB0316</name>
</gene>
<reference key="1">
    <citation type="journal article" date="2003" name="Mol. Microbiol.">
        <title>An integrated analysis of the genome of the hyperthermophilic archaeon Pyrococcus abyssi.</title>
        <authorList>
            <person name="Cohen G.N."/>
            <person name="Barbe V."/>
            <person name="Flament D."/>
            <person name="Galperin M."/>
            <person name="Heilig R."/>
            <person name="Lecompte O."/>
            <person name="Poch O."/>
            <person name="Prieur D."/>
            <person name="Querellou J."/>
            <person name="Ripp R."/>
            <person name="Thierry J.-C."/>
            <person name="Van der Oost J."/>
            <person name="Weissenbach J."/>
            <person name="Zivanovic Y."/>
            <person name="Forterre P."/>
        </authorList>
    </citation>
    <scope>NUCLEOTIDE SEQUENCE [LARGE SCALE GENOMIC DNA]</scope>
    <source>
        <strain>GE5 / Orsay</strain>
    </source>
</reference>
<reference key="2">
    <citation type="journal article" date="2012" name="Curr. Microbiol.">
        <title>Re-annotation of two hyperthermophilic archaea Pyrococcus abyssi GE5 and Pyrococcus furiosus DSM 3638.</title>
        <authorList>
            <person name="Gao J."/>
            <person name="Wang J."/>
        </authorList>
    </citation>
    <scope>GENOME REANNOTATION</scope>
    <source>
        <strain>GE5 / Orsay</strain>
    </source>
</reference>
<organism>
    <name type="scientific">Pyrococcus abyssi (strain GE5 / Orsay)</name>
    <dbReference type="NCBI Taxonomy" id="272844"/>
    <lineage>
        <taxon>Archaea</taxon>
        <taxon>Methanobacteriati</taxon>
        <taxon>Methanobacteriota</taxon>
        <taxon>Thermococci</taxon>
        <taxon>Thermococcales</taxon>
        <taxon>Thermococcaceae</taxon>
        <taxon>Pyrococcus</taxon>
    </lineage>
</organism>
<name>DNAG_PYRAB</name>
<feature type="chain" id="PRO_0000144127" description="DNA primase DnaG">
    <location>
        <begin position="1"/>
        <end position="447"/>
    </location>
</feature>
<feature type="domain" description="Toprim" evidence="1">
    <location>
        <begin position="200"/>
        <end position="274"/>
    </location>
</feature>
<feature type="binding site" evidence="1">
    <location>
        <position position="206"/>
    </location>
    <ligand>
        <name>Mg(2+)</name>
        <dbReference type="ChEBI" id="CHEBI:18420"/>
        <label>1</label>
        <note>catalytic</note>
    </ligand>
</feature>
<feature type="binding site" evidence="1">
    <location>
        <position position="248"/>
    </location>
    <ligand>
        <name>Mg(2+)</name>
        <dbReference type="ChEBI" id="CHEBI:18420"/>
        <label>1</label>
        <note>catalytic</note>
    </ligand>
</feature>
<feature type="binding site" evidence="1">
    <location>
        <position position="248"/>
    </location>
    <ligand>
        <name>Mg(2+)</name>
        <dbReference type="ChEBI" id="CHEBI:18420"/>
        <label>2</label>
    </ligand>
</feature>
<feature type="binding site" evidence="1">
    <location>
        <position position="250"/>
    </location>
    <ligand>
        <name>Mg(2+)</name>
        <dbReference type="ChEBI" id="CHEBI:18420"/>
        <label>2</label>
    </ligand>
</feature>
<comment type="function">
    <text evidence="1">RNA polymerase that catalyzes the synthesis of short RNA molecules used as primers for DNA polymerase during DNA replication. Also part of the exosome, which is a complex involved in RNA degradation. Acts as a poly(A)-binding protein that enhances the interaction between heteromeric, adenine-rich transcripts and the exosome.</text>
</comment>
<comment type="catalytic activity">
    <reaction evidence="1">
        <text>ssDNA + n NTP = ssDNA/pppN(pN)n-1 hybrid + (n-1) diphosphate.</text>
        <dbReference type="EC" id="2.7.7.101"/>
    </reaction>
</comment>
<comment type="cofactor">
    <cofactor evidence="1">
        <name>Mg(2+)</name>
        <dbReference type="ChEBI" id="CHEBI:18420"/>
    </cofactor>
    <text evidence="1">Binds two Mg(2+) per subunit.</text>
</comment>
<comment type="subunit">
    <text evidence="1">Forms a ternary complex with MCM helicase and DNA. Component of the archaeal exosome complex.</text>
</comment>
<comment type="similarity">
    <text evidence="1">Belongs to the archaeal DnaG primase family.</text>
</comment>
<accession>Q9V1F2</accession>
<accession>G8ZGH9</accession>
<keyword id="KW-0235">DNA replication</keyword>
<keyword id="KW-0240">DNA-directed RNA polymerase</keyword>
<keyword id="KW-0271">Exosome</keyword>
<keyword id="KW-0460">Magnesium</keyword>
<keyword id="KW-0479">Metal-binding</keyword>
<keyword id="KW-0548">Nucleotidyltransferase</keyword>
<keyword id="KW-0639">Primosome</keyword>
<keyword id="KW-0804">Transcription</keyword>
<keyword id="KW-0808">Transferase</keyword>
<dbReference type="EC" id="2.7.7.101" evidence="1"/>
<dbReference type="EMBL" id="AJ248284">
    <property type="protein sequence ID" value="CAB49397.1"/>
    <property type="molecule type" value="Genomic_DNA"/>
</dbReference>
<dbReference type="EMBL" id="HE613800">
    <property type="protein sequence ID" value="CCE69858.1"/>
    <property type="molecule type" value="Genomic_DNA"/>
</dbReference>
<dbReference type="PIR" id="F75164">
    <property type="entry name" value="F75164"/>
</dbReference>
<dbReference type="RefSeq" id="WP_010867599.1">
    <property type="nucleotide sequence ID" value="NC_000868.1"/>
</dbReference>
<dbReference type="SMR" id="Q9V1F2"/>
<dbReference type="STRING" id="272844.PAB0316"/>
<dbReference type="KEGG" id="pab:PAB0316"/>
<dbReference type="PATRIC" id="fig|272844.11.peg.502"/>
<dbReference type="eggNOG" id="arCOG04281">
    <property type="taxonomic scope" value="Archaea"/>
</dbReference>
<dbReference type="HOGENOM" id="CLU_034626_0_0_2"/>
<dbReference type="OrthoDB" id="8643at2157"/>
<dbReference type="PhylomeDB" id="Q9V1F2"/>
<dbReference type="Proteomes" id="UP000000810">
    <property type="component" value="Chromosome"/>
</dbReference>
<dbReference type="Proteomes" id="UP000009139">
    <property type="component" value="Chromosome"/>
</dbReference>
<dbReference type="GO" id="GO:0005737">
    <property type="term" value="C:cytoplasm"/>
    <property type="evidence" value="ECO:0007669"/>
    <property type="project" value="TreeGrafter"/>
</dbReference>
<dbReference type="GO" id="GO:0000428">
    <property type="term" value="C:DNA-directed RNA polymerase complex"/>
    <property type="evidence" value="ECO:0007669"/>
    <property type="project" value="UniProtKB-KW"/>
</dbReference>
<dbReference type="GO" id="GO:0000178">
    <property type="term" value="C:exosome (RNase complex)"/>
    <property type="evidence" value="ECO:0007669"/>
    <property type="project" value="UniProtKB-KW"/>
</dbReference>
<dbReference type="GO" id="GO:1990077">
    <property type="term" value="C:primosome complex"/>
    <property type="evidence" value="ECO:0007669"/>
    <property type="project" value="UniProtKB-KW"/>
</dbReference>
<dbReference type="GO" id="GO:0003899">
    <property type="term" value="F:DNA-directed RNA polymerase activity"/>
    <property type="evidence" value="ECO:0007669"/>
    <property type="project" value="InterPro"/>
</dbReference>
<dbReference type="GO" id="GO:0046872">
    <property type="term" value="F:metal ion binding"/>
    <property type="evidence" value="ECO:0007669"/>
    <property type="project" value="UniProtKB-KW"/>
</dbReference>
<dbReference type="GO" id="GO:0008143">
    <property type="term" value="F:poly(A) binding"/>
    <property type="evidence" value="ECO:0007669"/>
    <property type="project" value="InterPro"/>
</dbReference>
<dbReference type="GO" id="GO:0006269">
    <property type="term" value="P:DNA replication, synthesis of primer"/>
    <property type="evidence" value="ECO:0007669"/>
    <property type="project" value="UniProtKB-UniRule"/>
</dbReference>
<dbReference type="CDD" id="cd01029">
    <property type="entry name" value="TOPRIM_primases"/>
    <property type="match status" value="1"/>
</dbReference>
<dbReference type="FunFam" id="3.40.1360.10:FF:000010">
    <property type="entry name" value="DNA primase DnaG"/>
    <property type="match status" value="1"/>
</dbReference>
<dbReference type="Gene3D" id="3.40.1360.10">
    <property type="match status" value="1"/>
</dbReference>
<dbReference type="HAMAP" id="MF_00007">
    <property type="entry name" value="DNA_primase_DnaG_arc"/>
    <property type="match status" value="1"/>
</dbReference>
<dbReference type="InterPro" id="IPR050219">
    <property type="entry name" value="DnaG_primase"/>
</dbReference>
<dbReference type="InterPro" id="IPR020607">
    <property type="entry name" value="Primase_DnaG_arc"/>
</dbReference>
<dbReference type="InterPro" id="IPR034154">
    <property type="entry name" value="TOPRIM_DnaG/twinkle"/>
</dbReference>
<dbReference type="InterPro" id="IPR006171">
    <property type="entry name" value="TOPRIM_dom"/>
</dbReference>
<dbReference type="NCBIfam" id="NF003108">
    <property type="entry name" value="PRK04031.1-1"/>
    <property type="match status" value="1"/>
</dbReference>
<dbReference type="PANTHER" id="PTHR30313">
    <property type="entry name" value="DNA PRIMASE"/>
    <property type="match status" value="1"/>
</dbReference>
<dbReference type="PANTHER" id="PTHR30313:SF2">
    <property type="entry name" value="DNA PRIMASE"/>
    <property type="match status" value="1"/>
</dbReference>
<dbReference type="Pfam" id="PF13662">
    <property type="entry name" value="Toprim_4"/>
    <property type="match status" value="1"/>
</dbReference>
<dbReference type="SMART" id="SM00493">
    <property type="entry name" value="TOPRIM"/>
    <property type="match status" value="1"/>
</dbReference>
<dbReference type="SUPFAM" id="SSF56731">
    <property type="entry name" value="DNA primase core"/>
    <property type="match status" value="1"/>
</dbReference>
<dbReference type="PROSITE" id="PS50880">
    <property type="entry name" value="TOPRIM"/>
    <property type="match status" value="1"/>
</dbReference>
<evidence type="ECO:0000255" key="1">
    <source>
        <dbReference type="HAMAP-Rule" id="MF_00007"/>
    </source>
</evidence>
<sequence>MKRKRAIIQHILSEKRRIEKIKEGDSMAGKDDFGTTKYIIYAEFEANGVVERPDVVGAIFGQTEGLLGDDLDLRELQKTGRIGRIKVEVHTKAGKSYGTILVPSSLDRVETAIIAAALETIDRVGPCEAKIRVVKIEDVRASKRKYIIERAKEILETLIEEEIPETQELVEEVRKAVREMELIEYGPEKLPAGPHVPFSDSIIVVEGRADVLNLLRHGIKNAIAVEGTSIPETIIKLSKERIVTAFTDGDRGGELILKELLQVADIDYVARAPEGKEVEELTKKEIIKALRSKVPAEEVYNELFNKGKSFYEIVKEREGKVKEEKPEKEVQQPKPQVKANEKIVKPLPVPKQDYRGFEEFVERVKNSQDPIALLLDENKNVIAEVHTRDLLSAIDENDGVYAVIFNGIITQRLIDVVSEKGVRYLIGAKKANVVRRPVTLKVITFAE</sequence>